<evidence type="ECO:0000255" key="1"/>
<evidence type="ECO:0000269" key="2">
    <source>
    </source>
</evidence>
<evidence type="ECO:0000269" key="3">
    <source>
    </source>
</evidence>
<evidence type="ECO:0000269" key="4">
    <source>
    </source>
</evidence>
<evidence type="ECO:0000303" key="5">
    <source>
    </source>
</evidence>
<evidence type="ECO:0000305" key="6"/>
<evidence type="ECO:0000305" key="7">
    <source>
    </source>
</evidence>
<evidence type="ECO:0000312" key="8">
    <source>
        <dbReference type="EMBL" id="BAF43534.1"/>
    </source>
</evidence>
<evidence type="ECO:0007744" key="9">
    <source>
        <dbReference type="PDB" id="2MAR"/>
    </source>
</evidence>
<evidence type="ECO:0007829" key="10">
    <source>
        <dbReference type="PDB" id="2MAR"/>
    </source>
</evidence>
<feature type="signal peptide" evidence="3">
    <location>
        <begin position="1"/>
        <end position="18"/>
    </location>
</feature>
<feature type="chain" id="PRO_5002634876" description="SXP/RAL-2 family protein Ani s 5" evidence="1 7">
    <location>
        <begin position="19"/>
        <end position="152"/>
    </location>
</feature>
<feature type="region of interest" description="Necessary for IgE-binding" evidence="4">
    <location>
        <begin position="25"/>
        <end position="42"/>
    </location>
</feature>
<feature type="region of interest" description="IgG4-binding" evidence="4">
    <location>
        <begin position="49"/>
        <end position="68"/>
    </location>
</feature>
<feature type="region of interest" description="Necessary for IgE-binding" evidence="4">
    <location>
        <begin position="49"/>
        <end position="54"/>
    </location>
</feature>
<feature type="region of interest" description="Necessary for IgE-binding" evidence="4">
    <location>
        <begin position="58"/>
        <end position="66"/>
    </location>
</feature>
<feature type="region of interest" description="Necessary for IgE-binding" evidence="4">
    <location>
        <begin position="103"/>
        <end position="120"/>
    </location>
</feature>
<feature type="region of interest" description="IgG4-binding" evidence="4">
    <location>
        <begin position="118"/>
        <end position="137"/>
    </location>
</feature>
<feature type="region of interest" description="IgE-binding and IgG4-binding" evidence="4">
    <location>
        <begin position="127"/>
        <end position="146"/>
    </location>
</feature>
<feature type="sequence conflict" description="In Ref. 2; AA sequence." evidence="6" ref="2">
    <original>T</original>
    <variation>P</variation>
    <location>
        <position position="21"/>
    </location>
</feature>
<feature type="sequence conflict" description="In Ref. 2; AA sequence." evidence="6" ref="2">
    <location>
        <position position="22"/>
    </location>
</feature>
<feature type="turn" evidence="10">
    <location>
        <begin position="27"/>
        <end position="30"/>
    </location>
</feature>
<feature type="helix" evidence="10">
    <location>
        <begin position="33"/>
        <end position="45"/>
    </location>
</feature>
<feature type="helix" evidence="10">
    <location>
        <begin position="51"/>
        <end position="62"/>
    </location>
</feature>
<feature type="turn" evidence="10">
    <location>
        <begin position="63"/>
        <end position="65"/>
    </location>
</feature>
<feature type="helix" evidence="10">
    <location>
        <begin position="69"/>
        <end position="95"/>
    </location>
</feature>
<feature type="helix" evidence="10">
    <location>
        <begin position="100"/>
        <end position="114"/>
    </location>
</feature>
<feature type="helix" evidence="10">
    <location>
        <begin position="121"/>
        <end position="131"/>
    </location>
</feature>
<feature type="helix" evidence="10">
    <location>
        <begin position="136"/>
        <end position="143"/>
    </location>
</feature>
<feature type="strand" evidence="10">
    <location>
        <begin position="144"/>
        <end position="146"/>
    </location>
</feature>
<sequence>MKTLIVAALFCTIGMALADDTPPPPPFLAGAPQDVVKAFFELLKKDETKTDPEIEKDLDAWVDTLGGDYKAKFETFKKEMKAKEAELAKAHEEAVAKMTPEAKKADAELSKIAEDDSLNGIQKAQKIQAIYKTLPQSVKDELEKGIGPAVPQ</sequence>
<keyword id="KW-0002">3D-structure</keyword>
<keyword id="KW-0020">Allergen</keyword>
<keyword id="KW-0903">Direct protein sequencing</keyword>
<keyword id="KW-0389">IgE-binding protein</keyword>
<keyword id="KW-0390">IgG-binding protein</keyword>
<keyword id="KW-0964">Secreted</keyword>
<keyword id="KW-0732">Signal</keyword>
<dbReference type="EMBL" id="AB274998">
    <property type="protein sequence ID" value="BAF43534.1"/>
    <property type="molecule type" value="mRNA"/>
</dbReference>
<dbReference type="PDB" id="2MAR">
    <property type="method" value="NMR"/>
    <property type="chains" value="A=19-152"/>
</dbReference>
<dbReference type="PDBsum" id="2MAR"/>
<dbReference type="SMR" id="A1IKL2"/>
<dbReference type="Allergome" id="3765">
    <property type="allergen name" value="Ani s 5"/>
</dbReference>
<dbReference type="Allergome" id="3766">
    <property type="allergen name" value="Ani s 5.0101"/>
</dbReference>
<dbReference type="EvolutionaryTrace" id="A1IKL2"/>
<dbReference type="GO" id="GO:0005615">
    <property type="term" value="C:extracellular space"/>
    <property type="evidence" value="ECO:0000314"/>
    <property type="project" value="UniProtKB"/>
</dbReference>
<dbReference type="GO" id="GO:0019863">
    <property type="term" value="F:IgE binding"/>
    <property type="evidence" value="ECO:0000314"/>
    <property type="project" value="UniProtKB"/>
</dbReference>
<dbReference type="GO" id="GO:0019864">
    <property type="term" value="F:IgG binding"/>
    <property type="evidence" value="ECO:0000314"/>
    <property type="project" value="UniProtKB"/>
</dbReference>
<dbReference type="InterPro" id="IPR003677">
    <property type="entry name" value="ANIS5_cation-bd"/>
</dbReference>
<dbReference type="InterPro" id="IPR052823">
    <property type="entry name" value="SXP/RAL-2_related"/>
</dbReference>
<dbReference type="PANTHER" id="PTHR21593:SF36">
    <property type="entry name" value="DUF148 DOMAIN-CONTAINING PROTEIN-RELATED"/>
    <property type="match status" value="1"/>
</dbReference>
<dbReference type="PANTHER" id="PTHR21593">
    <property type="entry name" value="PRION-LIKE- Q/N-RICH -DOMAIN-BEARING PROTEIN PROTEIN"/>
    <property type="match status" value="1"/>
</dbReference>
<dbReference type="Pfam" id="PF02520">
    <property type="entry name" value="ANIS5_cation-bd"/>
    <property type="match status" value="1"/>
</dbReference>
<comment type="biophysicochemical properties">
    <temperatureDependence>
        <text evidence="3">Resistant to heat.</text>
    </temperatureDependence>
</comment>
<comment type="subunit">
    <text evidence="4">Monomer.</text>
</comment>
<comment type="subcellular location">
    <subcellularLocation>
        <location evidence="3">Secreted</location>
    </subcellularLocation>
</comment>
<comment type="tissue specificity">
    <text evidence="3">Excretory gland, ventriculus, and the luminal epithelium of the intestine of the larvae.</text>
</comment>
<comment type="allergen">
    <text evidence="2 3 4">Causes an allergic reaction in human. Binds to IgE and IgG4. A.simplex is a fish parasite that, when accidentally ingested by humans, may cause allergic reactions in sensitized individuals.</text>
</comment>
<comment type="similarity">
    <text evidence="5">Belongs to the SXP/RAL-2 family.</text>
</comment>
<reference evidence="8" key="1">
    <citation type="journal article" date="2007" name="Parasitol. Res.">
        <title>Molecular cloning and expression of two new allergens from Anisakis simplex.</title>
        <authorList>
            <person name="Kobayashi Y."/>
            <person name="Ishizaki S."/>
            <person name="Shimakura K."/>
            <person name="Nagashima Y."/>
            <person name="Shiomi K."/>
        </authorList>
    </citation>
    <scope>NUCLEOTIDE SEQUENCE [MRNA]</scope>
    <scope>ALLERGEN</scope>
    <source>
        <tissue evidence="5">Larva</tissue>
    </source>
</reference>
<reference key="2">
    <citation type="journal article" date="2008" name="Parasitol. Res.">
        <title>Isolation of Ani s 5, an excretory-secretory and highly heat-resistant allergen useful for the diagnosis of Anisakis larvae sensitization.</title>
        <authorList>
            <person name="Caballero M.L."/>
            <person name="Moneo I."/>
            <person name="Gomez-Aguado F."/>
            <person name="Corcuera M.T."/>
            <person name="Casado I."/>
            <person name="Rodriguez-Perez R."/>
        </authorList>
    </citation>
    <scope>PROTEIN SEQUENCE OF 19-33</scope>
    <scope>BIOPHYSICOCHEMICAL PROPERTIES</scope>
    <scope>SUBCELLULAR LOCATION</scope>
    <scope>TISSUE SPECIFICITY</scope>
    <scope>ALLERGEN</scope>
</reference>
<reference evidence="9" key="3">
    <citation type="journal article" date="2014" name="PLoS Negl. Trop. Dis.">
        <title>Relationships between IgE/IgG4 epitopes, structure and function in Anisakis simplex Ani s 5, a member of the SXP/RAL-2 protein family.</title>
        <authorList>
            <person name="Garcia-Mayoral M.F."/>
            <person name="Trevino M.A."/>
            <person name="Perez-Pinar T."/>
            <person name="Caballero M.L."/>
            <person name="Knaute T."/>
            <person name="Umpierrez A."/>
            <person name="Bruix M."/>
            <person name="Rodriguez-Perez R."/>
        </authorList>
    </citation>
    <scope>STRUCTURE BY NMR OF 19-152</scope>
    <scope>SUBUNIT</scope>
    <scope>ALLERGEN</scope>
    <scope>REGIONS</scope>
    <scope>CIRCULAR DICHROISM ANALYSIS</scope>
</reference>
<name>ANIS5_ANISI</name>
<accession>A1IKL2</accession>
<protein>
    <recommendedName>
        <fullName evidence="5 8">SXP/RAL-2 family protein Ani s 5</fullName>
    </recommendedName>
    <allergenName evidence="5">Ani s 5</allergenName>
</protein>
<proteinExistence type="evidence at protein level"/>
<organism evidence="8">
    <name type="scientific">Anisakis simplex</name>
    <name type="common">Herring worm</name>
    <dbReference type="NCBI Taxonomy" id="6269"/>
    <lineage>
        <taxon>Eukaryota</taxon>
        <taxon>Metazoa</taxon>
        <taxon>Ecdysozoa</taxon>
        <taxon>Nematoda</taxon>
        <taxon>Chromadorea</taxon>
        <taxon>Rhabditida</taxon>
        <taxon>Spirurina</taxon>
        <taxon>Ascaridomorpha</taxon>
        <taxon>Ascaridoidea</taxon>
        <taxon>Anisakidae</taxon>
        <taxon>Anisakis</taxon>
        <taxon>Anisakis simplex complex</taxon>
    </lineage>
</organism>